<comment type="function">
    <text evidence="1">Required for ciliogenesis.</text>
</comment>
<comment type="subcellular location">
    <subcellularLocation>
        <location evidence="1">Vacuole membrane</location>
        <topology evidence="1">Multi-pass membrane protein</topology>
    </subcellularLocation>
    <subcellularLocation>
        <location evidence="1">Cell projection</location>
        <location evidence="1">Cilium</location>
    </subcellularLocation>
    <text evidence="1">Localizes to vesicles en route to the base of cilium.</text>
</comment>
<comment type="similarity">
    <text evidence="3">Belongs to the TMEM138 family.</text>
</comment>
<name>TM138_XENTR</name>
<gene>
    <name type="primary">tmem138</name>
    <name type="ORF">TGas052n20.1</name>
</gene>
<organism>
    <name type="scientific">Xenopus tropicalis</name>
    <name type="common">Western clawed frog</name>
    <name type="synonym">Silurana tropicalis</name>
    <dbReference type="NCBI Taxonomy" id="8364"/>
    <lineage>
        <taxon>Eukaryota</taxon>
        <taxon>Metazoa</taxon>
        <taxon>Chordata</taxon>
        <taxon>Craniata</taxon>
        <taxon>Vertebrata</taxon>
        <taxon>Euteleostomi</taxon>
        <taxon>Amphibia</taxon>
        <taxon>Batrachia</taxon>
        <taxon>Anura</taxon>
        <taxon>Pipoidea</taxon>
        <taxon>Pipidae</taxon>
        <taxon>Xenopodinae</taxon>
        <taxon>Xenopus</taxon>
        <taxon>Silurana</taxon>
    </lineage>
</organism>
<reference key="1">
    <citation type="submission" date="2006-10" db="EMBL/GenBank/DDBJ databases">
        <authorList>
            <consortium name="Sanger Xenopus tropicalis EST/cDNA project"/>
        </authorList>
    </citation>
    <scope>NUCLEOTIDE SEQUENCE [LARGE SCALE MRNA]</scope>
    <source>
        <tissue>Gastrula</tissue>
    </source>
</reference>
<reference key="2">
    <citation type="submission" date="2004-08" db="EMBL/GenBank/DDBJ databases">
        <authorList>
            <consortium name="NIH - Xenopus Gene Collection (XGC) project"/>
        </authorList>
    </citation>
    <scope>NUCLEOTIDE SEQUENCE [LARGE SCALE MRNA]</scope>
    <source>
        <tissue>Embryo</tissue>
    </source>
</reference>
<accession>Q66JC0</accession>
<keyword id="KW-0966">Cell projection</keyword>
<keyword id="KW-0969">Cilium</keyword>
<keyword id="KW-0970">Cilium biogenesis/degradation</keyword>
<keyword id="KW-0325">Glycoprotein</keyword>
<keyword id="KW-0472">Membrane</keyword>
<keyword id="KW-1185">Reference proteome</keyword>
<keyword id="KW-0812">Transmembrane</keyword>
<keyword id="KW-1133">Transmembrane helix</keyword>
<keyword id="KW-0926">Vacuole</keyword>
<feature type="chain" id="PRO_0000285702" description="Transmembrane protein 138">
    <location>
        <begin position="1"/>
        <end position="162"/>
    </location>
</feature>
<feature type="transmembrane region" description="Helical" evidence="2">
    <location>
        <begin position="7"/>
        <end position="27"/>
    </location>
</feature>
<feature type="transmembrane region" description="Helical" evidence="2">
    <location>
        <begin position="41"/>
        <end position="61"/>
    </location>
</feature>
<feature type="transmembrane region" description="Helical" evidence="2">
    <location>
        <begin position="80"/>
        <end position="100"/>
    </location>
</feature>
<feature type="transmembrane region" description="Helical" evidence="2">
    <location>
        <begin position="110"/>
        <end position="130"/>
    </location>
</feature>
<feature type="glycosylation site" description="N-linked (GlcNAc...) asparagine" evidence="2">
    <location>
        <position position="6"/>
    </location>
</feature>
<evidence type="ECO:0000250" key="1"/>
<evidence type="ECO:0000255" key="2"/>
<evidence type="ECO:0000305" key="3"/>
<sequence>MLQPGNYSLVLSLQFLLLLFDLFVNSFSELLRDPPVNQLVLFILQDVGILFAAIVLFLMLFNTFVFQAGLVSLLCQRFQVTVILCAVYIALSISLHVWLMNLRWTGANRFVWSDGLLALFVLQRFVAVLYFYYYKRTALSMGDSRFYHDSLWLRKEFARVRG</sequence>
<proteinExistence type="evidence at transcript level"/>
<protein>
    <recommendedName>
        <fullName>Transmembrane protein 138</fullName>
    </recommendedName>
</protein>
<dbReference type="EMBL" id="CR761875">
    <property type="protein sequence ID" value="CAJ83601.1"/>
    <property type="molecule type" value="mRNA"/>
</dbReference>
<dbReference type="EMBL" id="BC080981">
    <property type="protein sequence ID" value="AAH80981.1"/>
    <property type="molecule type" value="mRNA"/>
</dbReference>
<dbReference type="RefSeq" id="NP_001008082.1">
    <property type="nucleotide sequence ID" value="NM_001008081.1"/>
</dbReference>
<dbReference type="FunCoup" id="Q66JC0">
    <property type="interactions" value="257"/>
</dbReference>
<dbReference type="STRING" id="8364.ENSXETP00000012270"/>
<dbReference type="GlyCosmos" id="Q66JC0">
    <property type="glycosylation" value="1 site, No reported glycans"/>
</dbReference>
<dbReference type="PaxDb" id="8364-ENSXETP00000019393"/>
<dbReference type="DNASU" id="493444"/>
<dbReference type="GeneID" id="493444"/>
<dbReference type="KEGG" id="xtr:493444"/>
<dbReference type="AGR" id="Xenbase:XB-GENE-973706"/>
<dbReference type="CTD" id="51524"/>
<dbReference type="Xenbase" id="XB-GENE-973706">
    <property type="gene designation" value="tmem138"/>
</dbReference>
<dbReference type="eggNOG" id="ENOG502RWE6">
    <property type="taxonomic scope" value="Eukaryota"/>
</dbReference>
<dbReference type="HOGENOM" id="CLU_104681_0_0_1"/>
<dbReference type="InParanoid" id="Q66JC0"/>
<dbReference type="OMA" id="FYKRTAM"/>
<dbReference type="OrthoDB" id="189688at2759"/>
<dbReference type="PhylomeDB" id="Q66JC0"/>
<dbReference type="TreeFam" id="TF315159"/>
<dbReference type="Proteomes" id="UP000008143">
    <property type="component" value="Chromosome 4"/>
</dbReference>
<dbReference type="Bgee" id="ENSXETG00000008824">
    <property type="expression patterns" value="Expressed in 2-cell stage embryo and 13 other cell types or tissues"/>
</dbReference>
<dbReference type="GO" id="GO:0005929">
    <property type="term" value="C:cilium"/>
    <property type="evidence" value="ECO:0000250"/>
    <property type="project" value="UniProtKB"/>
</dbReference>
<dbReference type="GO" id="GO:0005774">
    <property type="term" value="C:vacuolar membrane"/>
    <property type="evidence" value="ECO:0007669"/>
    <property type="project" value="UniProtKB-SubCell"/>
</dbReference>
<dbReference type="GO" id="GO:0060271">
    <property type="term" value="P:cilium assembly"/>
    <property type="evidence" value="ECO:0000250"/>
    <property type="project" value="UniProtKB"/>
</dbReference>
<dbReference type="InterPro" id="IPR024133">
    <property type="entry name" value="TM_138"/>
</dbReference>
<dbReference type="PANTHER" id="PTHR13306">
    <property type="entry name" value="TRANSMEMBRANE PROTEIN 138"/>
    <property type="match status" value="1"/>
</dbReference>
<dbReference type="PANTHER" id="PTHR13306:SF6">
    <property type="entry name" value="TRANSMEMBRANE PROTEIN 138"/>
    <property type="match status" value="1"/>
</dbReference>
<dbReference type="Pfam" id="PF14935">
    <property type="entry name" value="TMEM138"/>
    <property type="match status" value="1"/>
</dbReference>